<keyword id="KW-0028">Amino-acid biosynthesis</keyword>
<keyword id="KW-0100">Branched-chain amino acid biosynthesis</keyword>
<keyword id="KW-0963">Cytoplasm</keyword>
<keyword id="KW-0432">Leucine biosynthesis</keyword>
<keyword id="KW-0464">Manganese</keyword>
<keyword id="KW-0479">Metal-binding</keyword>
<keyword id="KW-1185">Reference proteome</keyword>
<keyword id="KW-0808">Transferase</keyword>
<feature type="chain" id="PRO_0000140365" description="2-isopropylmalate synthase">
    <location>
        <begin position="1"/>
        <end position="510"/>
    </location>
</feature>
<feature type="domain" description="Pyruvate carboxyltransferase" evidence="1">
    <location>
        <begin position="5"/>
        <end position="267"/>
    </location>
</feature>
<feature type="region of interest" description="Regulatory domain" evidence="1">
    <location>
        <begin position="392"/>
        <end position="510"/>
    </location>
</feature>
<feature type="binding site" evidence="1">
    <location>
        <position position="14"/>
    </location>
    <ligand>
        <name>Mn(2+)</name>
        <dbReference type="ChEBI" id="CHEBI:29035"/>
    </ligand>
</feature>
<feature type="binding site" evidence="1">
    <location>
        <position position="202"/>
    </location>
    <ligand>
        <name>Mn(2+)</name>
        <dbReference type="ChEBI" id="CHEBI:29035"/>
    </ligand>
</feature>
<feature type="binding site" evidence="1">
    <location>
        <position position="204"/>
    </location>
    <ligand>
        <name>Mn(2+)</name>
        <dbReference type="ChEBI" id="CHEBI:29035"/>
    </ligand>
</feature>
<feature type="binding site" evidence="1">
    <location>
        <position position="238"/>
    </location>
    <ligand>
        <name>Mn(2+)</name>
        <dbReference type="ChEBI" id="CHEBI:29035"/>
    </ligand>
</feature>
<comment type="function">
    <text evidence="1">Catalyzes the condensation of the acetyl group of acetyl-CoA with 3-methyl-2-oxobutanoate (2-ketoisovalerate) to form 3-carboxy-3-hydroxy-4-methylpentanoate (2-isopropylmalate).</text>
</comment>
<comment type="catalytic activity">
    <reaction evidence="1">
        <text>3-methyl-2-oxobutanoate + acetyl-CoA + H2O = (2S)-2-isopropylmalate + CoA + H(+)</text>
        <dbReference type="Rhea" id="RHEA:21524"/>
        <dbReference type="ChEBI" id="CHEBI:1178"/>
        <dbReference type="ChEBI" id="CHEBI:11851"/>
        <dbReference type="ChEBI" id="CHEBI:15377"/>
        <dbReference type="ChEBI" id="CHEBI:15378"/>
        <dbReference type="ChEBI" id="CHEBI:57287"/>
        <dbReference type="ChEBI" id="CHEBI:57288"/>
        <dbReference type="EC" id="2.3.3.13"/>
    </reaction>
</comment>
<comment type="cofactor">
    <cofactor evidence="1">
        <name>Mn(2+)</name>
        <dbReference type="ChEBI" id="CHEBI:29035"/>
    </cofactor>
</comment>
<comment type="pathway">
    <text evidence="1">Amino-acid biosynthesis; L-leucine biosynthesis; L-leucine from 3-methyl-2-oxobutanoate: step 1/4.</text>
</comment>
<comment type="subunit">
    <text evidence="1">Homodimer.</text>
</comment>
<comment type="subcellular location">
    <subcellularLocation>
        <location evidence="1">Cytoplasm</location>
    </subcellularLocation>
</comment>
<comment type="similarity">
    <text evidence="1">Belongs to the alpha-IPM synthase/homocitrate synthase family. LeuA type 1 subfamily.</text>
</comment>
<gene>
    <name evidence="1" type="primary">leuA</name>
    <name type="synonym">leuA1</name>
    <name type="ordered locus">NE1320</name>
</gene>
<reference key="1">
    <citation type="journal article" date="2003" name="J. Bacteriol.">
        <title>Complete genome sequence of the ammonia-oxidizing bacterium and obligate chemolithoautotroph Nitrosomonas europaea.</title>
        <authorList>
            <person name="Chain P."/>
            <person name="Lamerdin J.E."/>
            <person name="Larimer F.W."/>
            <person name="Regala W."/>
            <person name="Lao V."/>
            <person name="Land M.L."/>
            <person name="Hauser L."/>
            <person name="Hooper A.B."/>
            <person name="Klotz M.G."/>
            <person name="Norton J."/>
            <person name="Sayavedra-Soto L.A."/>
            <person name="Arciero D.M."/>
            <person name="Hommes N.G."/>
            <person name="Whittaker M.M."/>
            <person name="Arp D.J."/>
        </authorList>
    </citation>
    <scope>NUCLEOTIDE SEQUENCE [LARGE SCALE GENOMIC DNA]</scope>
    <source>
        <strain>ATCC 19718 / CIP 103999 / KCTC 2705 / NBRC 14298</strain>
    </source>
</reference>
<name>LEU1_NITEU</name>
<sequence>MKEHLVIFDTTLRDGEQSPGASMTMEEKVRIARQLERMGVDVIEAGFPAASRGDFEAVRAVAEAVSNSTVCGLARAMEADIDRTGEALQVNQNVRIHTFIATSPIHMKNKLRMSPDQVIDQAIKAVKWARQYTDNVEFSPEDAGRSEIDFLCRVLEAVIDAGARTLNIPDTVGYTMPDQFGGLIRTLRERIPNSDKAIFSVHCHNDLGLAVANSLSAVMNGARQVECTINGLGERAGNAALEEIVMAVRTRQDYFPCDTRIDTTQIVPASKLVSGITGFPVQPNKAIVGANAFAHESGIHQDGVLKHRETYEIMRAEDVGWGANKLLLGKHSGRNAFRSRLKELGIGLESEEKLNAIFLRFKDLADKKHEIFDEDLHALVSDEAQIPEEHYRLLSLHAVSETGEIPSAQVVIAVGGSEKQAVSEGSGPVDATFRAIEKILDSKVELQLFSVNNITSGTDAQGEVTVRLQKAGRIVNGHGADTDIIAASAKAYLSACNKLHSSLERTHPQI</sequence>
<proteinExistence type="inferred from homology"/>
<organism>
    <name type="scientific">Nitrosomonas europaea (strain ATCC 19718 / CIP 103999 / KCTC 2705 / NBRC 14298)</name>
    <dbReference type="NCBI Taxonomy" id="228410"/>
    <lineage>
        <taxon>Bacteria</taxon>
        <taxon>Pseudomonadati</taxon>
        <taxon>Pseudomonadota</taxon>
        <taxon>Betaproteobacteria</taxon>
        <taxon>Nitrosomonadales</taxon>
        <taxon>Nitrosomonadaceae</taxon>
        <taxon>Nitrosomonas</taxon>
    </lineage>
</organism>
<dbReference type="EC" id="2.3.3.13" evidence="1"/>
<dbReference type="EMBL" id="AL954747">
    <property type="protein sequence ID" value="CAD85231.1"/>
    <property type="molecule type" value="Genomic_DNA"/>
</dbReference>
<dbReference type="RefSeq" id="WP_011111898.1">
    <property type="nucleotide sequence ID" value="NC_004757.1"/>
</dbReference>
<dbReference type="SMR" id="Q820M0"/>
<dbReference type="STRING" id="228410.NE1320"/>
<dbReference type="GeneID" id="87104496"/>
<dbReference type="KEGG" id="neu:NE1320"/>
<dbReference type="eggNOG" id="COG0119">
    <property type="taxonomic scope" value="Bacteria"/>
</dbReference>
<dbReference type="HOGENOM" id="CLU_022158_0_1_4"/>
<dbReference type="OrthoDB" id="9803573at2"/>
<dbReference type="PhylomeDB" id="Q820M0"/>
<dbReference type="UniPathway" id="UPA00048">
    <property type="reaction ID" value="UER00070"/>
</dbReference>
<dbReference type="Proteomes" id="UP000001416">
    <property type="component" value="Chromosome"/>
</dbReference>
<dbReference type="GO" id="GO:0005829">
    <property type="term" value="C:cytosol"/>
    <property type="evidence" value="ECO:0007669"/>
    <property type="project" value="TreeGrafter"/>
</dbReference>
<dbReference type="GO" id="GO:0003852">
    <property type="term" value="F:2-isopropylmalate synthase activity"/>
    <property type="evidence" value="ECO:0007669"/>
    <property type="project" value="UniProtKB-UniRule"/>
</dbReference>
<dbReference type="GO" id="GO:0003985">
    <property type="term" value="F:acetyl-CoA C-acetyltransferase activity"/>
    <property type="evidence" value="ECO:0007669"/>
    <property type="project" value="UniProtKB-UniRule"/>
</dbReference>
<dbReference type="GO" id="GO:0030145">
    <property type="term" value="F:manganese ion binding"/>
    <property type="evidence" value="ECO:0007669"/>
    <property type="project" value="UniProtKB-UniRule"/>
</dbReference>
<dbReference type="GO" id="GO:0009098">
    <property type="term" value="P:L-leucine biosynthetic process"/>
    <property type="evidence" value="ECO:0007669"/>
    <property type="project" value="UniProtKB-UniRule"/>
</dbReference>
<dbReference type="CDD" id="cd07940">
    <property type="entry name" value="DRE_TIM_IPMS"/>
    <property type="match status" value="1"/>
</dbReference>
<dbReference type="FunFam" id="1.10.238.260:FF:000001">
    <property type="entry name" value="2-isopropylmalate synthase"/>
    <property type="match status" value="1"/>
</dbReference>
<dbReference type="FunFam" id="3.20.20.70:FF:000010">
    <property type="entry name" value="2-isopropylmalate synthase"/>
    <property type="match status" value="1"/>
</dbReference>
<dbReference type="FunFam" id="3.30.160.270:FF:000003">
    <property type="entry name" value="2-isopropylmalate synthase"/>
    <property type="match status" value="1"/>
</dbReference>
<dbReference type="Gene3D" id="1.10.238.260">
    <property type="match status" value="1"/>
</dbReference>
<dbReference type="Gene3D" id="3.30.160.270">
    <property type="match status" value="1"/>
</dbReference>
<dbReference type="Gene3D" id="3.20.20.70">
    <property type="entry name" value="Aldolase class I"/>
    <property type="match status" value="1"/>
</dbReference>
<dbReference type="HAMAP" id="MF_01025">
    <property type="entry name" value="LeuA_type1"/>
    <property type="match status" value="1"/>
</dbReference>
<dbReference type="InterPro" id="IPR050073">
    <property type="entry name" value="2-IPM_HCS-like"/>
</dbReference>
<dbReference type="InterPro" id="IPR013709">
    <property type="entry name" value="2-isopropylmalate_synth_dimer"/>
</dbReference>
<dbReference type="InterPro" id="IPR002034">
    <property type="entry name" value="AIPM/Hcit_synth_CS"/>
</dbReference>
<dbReference type="InterPro" id="IPR013785">
    <property type="entry name" value="Aldolase_TIM"/>
</dbReference>
<dbReference type="InterPro" id="IPR054691">
    <property type="entry name" value="LeuA/HCS_post-cat"/>
</dbReference>
<dbReference type="InterPro" id="IPR036230">
    <property type="entry name" value="LeuA_allosteric_dom_sf"/>
</dbReference>
<dbReference type="InterPro" id="IPR005671">
    <property type="entry name" value="LeuA_bact_synth"/>
</dbReference>
<dbReference type="InterPro" id="IPR000891">
    <property type="entry name" value="PYR_CT"/>
</dbReference>
<dbReference type="NCBIfam" id="TIGR00973">
    <property type="entry name" value="leuA_bact"/>
    <property type="match status" value="1"/>
</dbReference>
<dbReference type="NCBIfam" id="NF002086">
    <property type="entry name" value="PRK00915.1-3"/>
    <property type="match status" value="1"/>
</dbReference>
<dbReference type="NCBIfam" id="NF002087">
    <property type="entry name" value="PRK00915.1-4"/>
    <property type="match status" value="1"/>
</dbReference>
<dbReference type="PANTHER" id="PTHR10277:SF9">
    <property type="entry name" value="2-ISOPROPYLMALATE SYNTHASE 1, CHLOROPLASTIC-RELATED"/>
    <property type="match status" value="1"/>
</dbReference>
<dbReference type="PANTHER" id="PTHR10277">
    <property type="entry name" value="HOMOCITRATE SYNTHASE-RELATED"/>
    <property type="match status" value="1"/>
</dbReference>
<dbReference type="Pfam" id="PF22617">
    <property type="entry name" value="HCS_D2"/>
    <property type="match status" value="1"/>
</dbReference>
<dbReference type="Pfam" id="PF00682">
    <property type="entry name" value="HMGL-like"/>
    <property type="match status" value="1"/>
</dbReference>
<dbReference type="Pfam" id="PF08502">
    <property type="entry name" value="LeuA_dimer"/>
    <property type="match status" value="1"/>
</dbReference>
<dbReference type="SMART" id="SM00917">
    <property type="entry name" value="LeuA_dimer"/>
    <property type="match status" value="1"/>
</dbReference>
<dbReference type="SUPFAM" id="SSF110921">
    <property type="entry name" value="2-isopropylmalate synthase LeuA, allosteric (dimerisation) domain"/>
    <property type="match status" value="1"/>
</dbReference>
<dbReference type="SUPFAM" id="SSF51569">
    <property type="entry name" value="Aldolase"/>
    <property type="match status" value="1"/>
</dbReference>
<dbReference type="PROSITE" id="PS00815">
    <property type="entry name" value="AIPM_HOMOCIT_SYNTH_1"/>
    <property type="match status" value="1"/>
</dbReference>
<dbReference type="PROSITE" id="PS00816">
    <property type="entry name" value="AIPM_HOMOCIT_SYNTH_2"/>
    <property type="match status" value="1"/>
</dbReference>
<dbReference type="PROSITE" id="PS50991">
    <property type="entry name" value="PYR_CT"/>
    <property type="match status" value="1"/>
</dbReference>
<protein>
    <recommendedName>
        <fullName evidence="1">2-isopropylmalate synthase</fullName>
        <ecNumber evidence="1">2.3.3.13</ecNumber>
    </recommendedName>
    <alternativeName>
        <fullName evidence="1">Alpha-IPM synthase</fullName>
    </alternativeName>
    <alternativeName>
        <fullName evidence="1">Alpha-isopropylmalate synthase</fullName>
    </alternativeName>
</protein>
<evidence type="ECO:0000255" key="1">
    <source>
        <dbReference type="HAMAP-Rule" id="MF_01025"/>
    </source>
</evidence>
<accession>Q820M0</accession>